<sequence>MPKMKTKSSAKKRFKVTASGKIKVAAAGKRHGMIKRSNKFIRDARGTMVLCEQDAKKVIQHYLPNGL</sequence>
<protein>
    <recommendedName>
        <fullName evidence="1">Large ribosomal subunit protein bL35</fullName>
    </recommendedName>
    <alternativeName>
        <fullName evidence="2">50S ribosomal protein L35</fullName>
    </alternativeName>
</protein>
<comment type="similarity">
    <text evidence="1">Belongs to the bacterial ribosomal protein bL35 family.</text>
</comment>
<proteinExistence type="inferred from homology"/>
<organism>
    <name type="scientific">Bartonella tribocorum (strain CIP 105476 / IBS 506)</name>
    <dbReference type="NCBI Taxonomy" id="382640"/>
    <lineage>
        <taxon>Bacteria</taxon>
        <taxon>Pseudomonadati</taxon>
        <taxon>Pseudomonadota</taxon>
        <taxon>Alphaproteobacteria</taxon>
        <taxon>Hyphomicrobiales</taxon>
        <taxon>Bartonellaceae</taxon>
        <taxon>Bartonella</taxon>
    </lineage>
</organism>
<gene>
    <name evidence="1" type="primary">rpmI</name>
    <name type="ordered locus">BT_0099</name>
</gene>
<accession>A9ILR1</accession>
<evidence type="ECO:0000255" key="1">
    <source>
        <dbReference type="HAMAP-Rule" id="MF_00514"/>
    </source>
</evidence>
<evidence type="ECO:0000305" key="2"/>
<keyword id="KW-0687">Ribonucleoprotein</keyword>
<keyword id="KW-0689">Ribosomal protein</keyword>
<name>RL35_BART1</name>
<feature type="chain" id="PRO_1000081596" description="Large ribosomal subunit protein bL35">
    <location>
        <begin position="1"/>
        <end position="67"/>
    </location>
</feature>
<dbReference type="EMBL" id="AM260525">
    <property type="protein sequence ID" value="CAK00592.1"/>
    <property type="molecule type" value="Genomic_DNA"/>
</dbReference>
<dbReference type="RefSeq" id="WP_012230422.1">
    <property type="nucleotide sequence ID" value="NC_010161.1"/>
</dbReference>
<dbReference type="SMR" id="A9ILR1"/>
<dbReference type="KEGG" id="btr:BT_0099"/>
<dbReference type="eggNOG" id="COG0291">
    <property type="taxonomic scope" value="Bacteria"/>
</dbReference>
<dbReference type="HOGENOM" id="CLU_169643_2_1_5"/>
<dbReference type="Proteomes" id="UP000001592">
    <property type="component" value="Chromosome"/>
</dbReference>
<dbReference type="GO" id="GO:0022625">
    <property type="term" value="C:cytosolic large ribosomal subunit"/>
    <property type="evidence" value="ECO:0007669"/>
    <property type="project" value="TreeGrafter"/>
</dbReference>
<dbReference type="GO" id="GO:0003735">
    <property type="term" value="F:structural constituent of ribosome"/>
    <property type="evidence" value="ECO:0007669"/>
    <property type="project" value="InterPro"/>
</dbReference>
<dbReference type="GO" id="GO:0006412">
    <property type="term" value="P:translation"/>
    <property type="evidence" value="ECO:0007669"/>
    <property type="project" value="UniProtKB-UniRule"/>
</dbReference>
<dbReference type="FunFam" id="4.10.410.60:FF:000001">
    <property type="entry name" value="50S ribosomal protein L35"/>
    <property type="match status" value="1"/>
</dbReference>
<dbReference type="Gene3D" id="4.10.410.60">
    <property type="match status" value="1"/>
</dbReference>
<dbReference type="HAMAP" id="MF_00514">
    <property type="entry name" value="Ribosomal_bL35"/>
    <property type="match status" value="1"/>
</dbReference>
<dbReference type="InterPro" id="IPR001706">
    <property type="entry name" value="Ribosomal_bL35"/>
</dbReference>
<dbReference type="InterPro" id="IPR021137">
    <property type="entry name" value="Ribosomal_bL35-like"/>
</dbReference>
<dbReference type="InterPro" id="IPR018265">
    <property type="entry name" value="Ribosomal_bL35_CS"/>
</dbReference>
<dbReference type="InterPro" id="IPR037229">
    <property type="entry name" value="Ribosomal_bL35_sf"/>
</dbReference>
<dbReference type="NCBIfam" id="TIGR00001">
    <property type="entry name" value="rpmI_bact"/>
    <property type="match status" value="1"/>
</dbReference>
<dbReference type="PANTHER" id="PTHR33343">
    <property type="entry name" value="54S RIBOSOMAL PROTEIN BL35M"/>
    <property type="match status" value="1"/>
</dbReference>
<dbReference type="PANTHER" id="PTHR33343:SF1">
    <property type="entry name" value="LARGE RIBOSOMAL SUBUNIT PROTEIN BL35M"/>
    <property type="match status" value="1"/>
</dbReference>
<dbReference type="Pfam" id="PF01632">
    <property type="entry name" value="Ribosomal_L35p"/>
    <property type="match status" value="1"/>
</dbReference>
<dbReference type="PRINTS" id="PR00064">
    <property type="entry name" value="RIBOSOMALL35"/>
</dbReference>
<dbReference type="SUPFAM" id="SSF143034">
    <property type="entry name" value="L35p-like"/>
    <property type="match status" value="1"/>
</dbReference>
<dbReference type="PROSITE" id="PS00936">
    <property type="entry name" value="RIBOSOMAL_L35"/>
    <property type="match status" value="1"/>
</dbReference>
<reference key="1">
    <citation type="journal article" date="2007" name="Nat. Genet.">
        <title>Genomic analysis of Bartonella identifies type IV secretion systems as host adaptability factors.</title>
        <authorList>
            <person name="Saenz H.L."/>
            <person name="Engel P."/>
            <person name="Stoeckli M.C."/>
            <person name="Lanz C."/>
            <person name="Raddatz G."/>
            <person name="Vayssier-Taussat M."/>
            <person name="Birtles R."/>
            <person name="Schuster S.C."/>
            <person name="Dehio C."/>
        </authorList>
    </citation>
    <scope>NUCLEOTIDE SEQUENCE [LARGE SCALE GENOMIC DNA]</scope>
    <source>
        <strain>CIP 105476 / IBS 506</strain>
    </source>
</reference>